<keyword id="KW-0963">Cytoplasm</keyword>
<keyword id="KW-0488">Methylation</keyword>
<keyword id="KW-0648">Protein biosynthesis</keyword>
<keyword id="KW-1185">Reference proteome</keyword>
<comment type="function">
    <text evidence="1">Peptide chain release factor 1 directs the termination of translation in response to the peptide chain termination codons UAG and UAA.</text>
</comment>
<comment type="subcellular location">
    <subcellularLocation>
        <location evidence="1">Cytoplasm</location>
    </subcellularLocation>
</comment>
<comment type="PTM">
    <text evidence="1">Methylated by PrmC. Methylation increases the termination efficiency of RF1.</text>
</comment>
<comment type="similarity">
    <text evidence="1">Belongs to the prokaryotic/mitochondrial release factor family.</text>
</comment>
<accession>Q73X48</accession>
<gene>
    <name evidence="1" type="primary">prfA</name>
    <name type="ordered locus">MAP_2462c</name>
</gene>
<reference key="1">
    <citation type="journal article" date="2005" name="Proc. Natl. Acad. Sci. U.S.A.">
        <title>The complete genome sequence of Mycobacterium avium subspecies paratuberculosis.</title>
        <authorList>
            <person name="Li L."/>
            <person name="Bannantine J.P."/>
            <person name="Zhang Q."/>
            <person name="Amonsin A."/>
            <person name="May B.J."/>
            <person name="Alt D."/>
            <person name="Banerji N."/>
            <person name="Kanjilal S."/>
            <person name="Kapur V."/>
        </authorList>
    </citation>
    <scope>NUCLEOTIDE SEQUENCE [LARGE SCALE GENOMIC DNA]</scope>
    <source>
        <strain>ATCC BAA-968 / K-10</strain>
    </source>
</reference>
<name>RF1_MYCPA</name>
<dbReference type="EMBL" id="AE016958">
    <property type="protein sequence ID" value="AAS04779.1"/>
    <property type="molecule type" value="Genomic_DNA"/>
</dbReference>
<dbReference type="RefSeq" id="WP_003873231.1">
    <property type="nucleotide sequence ID" value="NZ_CP106873.1"/>
</dbReference>
<dbReference type="SMR" id="Q73X48"/>
<dbReference type="STRING" id="262316.MAP_2462c"/>
<dbReference type="GeneID" id="75269278"/>
<dbReference type="KEGG" id="mpa:MAP_2462c"/>
<dbReference type="eggNOG" id="COG0216">
    <property type="taxonomic scope" value="Bacteria"/>
</dbReference>
<dbReference type="HOGENOM" id="CLU_036856_0_1_11"/>
<dbReference type="Proteomes" id="UP000000580">
    <property type="component" value="Chromosome"/>
</dbReference>
<dbReference type="GO" id="GO:0005737">
    <property type="term" value="C:cytoplasm"/>
    <property type="evidence" value="ECO:0007669"/>
    <property type="project" value="UniProtKB-SubCell"/>
</dbReference>
<dbReference type="GO" id="GO:0016149">
    <property type="term" value="F:translation release factor activity, codon specific"/>
    <property type="evidence" value="ECO:0007669"/>
    <property type="project" value="UniProtKB-UniRule"/>
</dbReference>
<dbReference type="FunFam" id="3.30.160.20:FF:000004">
    <property type="entry name" value="Peptide chain release factor 1"/>
    <property type="match status" value="1"/>
</dbReference>
<dbReference type="Gene3D" id="3.30.160.20">
    <property type="match status" value="1"/>
</dbReference>
<dbReference type="Gene3D" id="3.30.70.1660">
    <property type="match status" value="1"/>
</dbReference>
<dbReference type="Gene3D" id="6.10.140.1950">
    <property type="match status" value="1"/>
</dbReference>
<dbReference type="HAMAP" id="MF_00093">
    <property type="entry name" value="Rel_fac_1"/>
    <property type="match status" value="1"/>
</dbReference>
<dbReference type="InterPro" id="IPR005139">
    <property type="entry name" value="PCRF"/>
</dbReference>
<dbReference type="InterPro" id="IPR000352">
    <property type="entry name" value="Pep_chain_release_fac_I"/>
</dbReference>
<dbReference type="InterPro" id="IPR045853">
    <property type="entry name" value="Pep_chain_release_fac_I_sf"/>
</dbReference>
<dbReference type="InterPro" id="IPR050057">
    <property type="entry name" value="Prokaryotic/Mito_RF"/>
</dbReference>
<dbReference type="InterPro" id="IPR004373">
    <property type="entry name" value="RF-1"/>
</dbReference>
<dbReference type="NCBIfam" id="TIGR00019">
    <property type="entry name" value="prfA"/>
    <property type="match status" value="1"/>
</dbReference>
<dbReference type="NCBIfam" id="NF001859">
    <property type="entry name" value="PRK00591.1"/>
    <property type="match status" value="1"/>
</dbReference>
<dbReference type="PANTHER" id="PTHR43804">
    <property type="entry name" value="LD18447P"/>
    <property type="match status" value="1"/>
</dbReference>
<dbReference type="PANTHER" id="PTHR43804:SF7">
    <property type="entry name" value="LD18447P"/>
    <property type="match status" value="1"/>
</dbReference>
<dbReference type="Pfam" id="PF03462">
    <property type="entry name" value="PCRF"/>
    <property type="match status" value="1"/>
</dbReference>
<dbReference type="Pfam" id="PF00472">
    <property type="entry name" value="RF-1"/>
    <property type="match status" value="1"/>
</dbReference>
<dbReference type="SMART" id="SM00937">
    <property type="entry name" value="PCRF"/>
    <property type="match status" value="1"/>
</dbReference>
<dbReference type="SUPFAM" id="SSF75620">
    <property type="entry name" value="Release factor"/>
    <property type="match status" value="1"/>
</dbReference>
<dbReference type="PROSITE" id="PS00745">
    <property type="entry name" value="RF_PROK_I"/>
    <property type="match status" value="1"/>
</dbReference>
<proteinExistence type="inferred from homology"/>
<protein>
    <recommendedName>
        <fullName evidence="1">Peptide chain release factor 1</fullName>
        <shortName evidence="1">RF-1</shortName>
    </recommendedName>
</protein>
<feature type="chain" id="PRO_0000177707" description="Peptide chain release factor 1">
    <location>
        <begin position="1"/>
        <end position="357"/>
    </location>
</feature>
<feature type="modified residue" description="N5-methylglutamine" evidence="1">
    <location>
        <position position="236"/>
    </location>
</feature>
<organism>
    <name type="scientific">Mycolicibacterium paratuberculosis (strain ATCC BAA-968 / K-10)</name>
    <name type="common">Mycobacterium paratuberculosis</name>
    <dbReference type="NCBI Taxonomy" id="262316"/>
    <lineage>
        <taxon>Bacteria</taxon>
        <taxon>Bacillati</taxon>
        <taxon>Actinomycetota</taxon>
        <taxon>Actinomycetes</taxon>
        <taxon>Mycobacteriales</taxon>
        <taxon>Mycobacteriaceae</taxon>
        <taxon>Mycobacterium</taxon>
        <taxon>Mycobacterium avium complex (MAC)</taxon>
    </lineage>
</organism>
<sequence>MTQPVQTIDVLLAEHADLERRLSDPDLHSNPDEARKAGRRFARLAPIVGTYRKLMAAREDLETARELAADDDSFTAEVADLESRVAQLDTQLTDMLAPRDPHDADDIVLEVKSGEGGEESALFAADLARMYIRYAERHGWTVTVLDEITSDLGGYKDATLSIRSKGDSADGVWSRMKFEGGVHRVQRVPVTESQGRVHTSAAGVLVYPEPEEVAEVQIDESDLRIDVFRSSGKGGQGVNTTDSAVRITHLPTGVVVTCQNERSQLQNKARALQVLAARLQAMAEEQASAEASADRASQIRTVDRSERIRTYNFPENRITDHRIGFKAHNLDQVLDGDLDALFDALAAADKQSRLQQA</sequence>
<evidence type="ECO:0000255" key="1">
    <source>
        <dbReference type="HAMAP-Rule" id="MF_00093"/>
    </source>
</evidence>